<feature type="chain" id="PRO_0000420846" description="Toxin Doc">
    <location>
        <begin position="1"/>
        <end position="130"/>
    </location>
</feature>
<feature type="domain" description="Fido" evidence="1">
    <location>
        <begin position="5"/>
        <end position="126"/>
    </location>
</feature>
<evidence type="ECO:0000255" key="1">
    <source>
        <dbReference type="PROSITE-ProRule" id="PRU00791"/>
    </source>
</evidence>
<evidence type="ECO:0000269" key="2">
    <source>
    </source>
</evidence>
<proteinExistence type="evidence at protein level"/>
<sequence>MTEYLDREDVLTAGSIAFGGELKVRDYGLLDAAVARPQATVYGVDAYPRLWDKAAALLQSLARNHALVDGNKRTAWAAAWTFLHINGVQLAADFDVDRAEDLMNEVATRDCDLDSIAAELAGFAAAAQTG</sequence>
<gene>
    <name type="primary">doc</name>
    <name type="ordered locus">MSMEG_1278</name>
    <name type="ordered locus">MSMEI_1240</name>
</gene>
<protein>
    <recommendedName>
        <fullName>Toxin Doc</fullName>
    </recommendedName>
    <alternativeName>
        <fullName>Death on curing protein</fullName>
    </alternativeName>
</protein>
<comment type="function">
    <text evidence="2">Toxic component of a type II toxin-antitoxin (TA) system. Upon overexpression causes bacteriostasis. Its effect is neutralized by coexpression with cognate antitoxin PhD. May bind the 30S ribosomal subunit. In M.smegmatis 3 TA systems (VapB-VapC, MazE-MazF and Phd-Doc) may be involved in monitoring the nutritional supply and physiological state of the cell, linking catabolic with anabolic reactions.</text>
</comment>
<comment type="induction">
    <text evidence="2">Constitutively expressed in all growth phases, part of the MSMEG_1276-phd-doc-MSMEG_1279 operon. Negatively autoregulated by one or both of Phd-Doc.</text>
</comment>
<comment type="disruption phenotype">
    <text evidence="2">The phd-doc operon is not essential. A triple TA mutant (missing vapB-vapC, mazE-mazF and phd-doc TA systems) survives antibiotic challenge, suggesting the TA systems are not required to generate drug-resistant cells. However the mutant is more sensitive to oxidative and heat stress, and does not survive long term starvation during aerobic growth on complex medium. There is a difference in the level of branched-chain amino acids, which may play a role in monitoring the nutritional supply and physiological state of the cell.</text>
</comment>
<name>DOC_MYCS2</name>
<organism>
    <name type="scientific">Mycolicibacterium smegmatis (strain ATCC 700084 / mc(2)155)</name>
    <name type="common">Mycobacterium smegmatis</name>
    <dbReference type="NCBI Taxonomy" id="246196"/>
    <lineage>
        <taxon>Bacteria</taxon>
        <taxon>Bacillati</taxon>
        <taxon>Actinomycetota</taxon>
        <taxon>Actinomycetes</taxon>
        <taxon>Mycobacteriales</taxon>
        <taxon>Mycobacteriaceae</taxon>
        <taxon>Mycolicibacterium</taxon>
    </lineage>
</organism>
<dbReference type="EMBL" id="CP000480">
    <property type="protein sequence ID" value="ABK72269.1"/>
    <property type="molecule type" value="Genomic_DNA"/>
</dbReference>
<dbReference type="EMBL" id="CP001663">
    <property type="protein sequence ID" value="AFP37716.1"/>
    <property type="molecule type" value="Genomic_DNA"/>
</dbReference>
<dbReference type="RefSeq" id="WP_011727560.1">
    <property type="nucleotide sequence ID" value="NZ_SIJM01000042.1"/>
</dbReference>
<dbReference type="RefSeq" id="YP_885668.1">
    <property type="nucleotide sequence ID" value="NC_008596.1"/>
</dbReference>
<dbReference type="SMR" id="A0QRY0"/>
<dbReference type="STRING" id="246196.MSMEG_1278"/>
<dbReference type="PaxDb" id="246196-MSMEI_1240"/>
<dbReference type="KEGG" id="msb:LJ00_06365"/>
<dbReference type="KEGG" id="msg:MSMEI_1240"/>
<dbReference type="KEGG" id="msm:MSMEG_1278"/>
<dbReference type="PATRIC" id="fig|246196.19.peg.1267"/>
<dbReference type="eggNOG" id="COG3654">
    <property type="taxonomic scope" value="Bacteria"/>
</dbReference>
<dbReference type="OrthoDB" id="9802752at2"/>
<dbReference type="Proteomes" id="UP000000757">
    <property type="component" value="Chromosome"/>
</dbReference>
<dbReference type="Proteomes" id="UP000006158">
    <property type="component" value="Chromosome"/>
</dbReference>
<dbReference type="GO" id="GO:0016301">
    <property type="term" value="F:kinase activity"/>
    <property type="evidence" value="ECO:0007669"/>
    <property type="project" value="InterPro"/>
</dbReference>
<dbReference type="Gene3D" id="1.20.120.1870">
    <property type="entry name" value="Fic/DOC protein, Fido domain"/>
    <property type="match status" value="1"/>
</dbReference>
<dbReference type="InterPro" id="IPR006440">
    <property type="entry name" value="Doc"/>
</dbReference>
<dbReference type="InterPro" id="IPR003812">
    <property type="entry name" value="Fido"/>
</dbReference>
<dbReference type="InterPro" id="IPR053737">
    <property type="entry name" value="Type_II_TA_Toxin"/>
</dbReference>
<dbReference type="NCBIfam" id="TIGR01550">
    <property type="entry name" value="DOC_P1"/>
    <property type="match status" value="1"/>
</dbReference>
<dbReference type="PANTHER" id="PTHR39426">
    <property type="entry name" value="HOMOLOGY TO DEATH-ON-CURING PROTEIN OF PHAGE P1"/>
    <property type="match status" value="1"/>
</dbReference>
<dbReference type="PANTHER" id="PTHR39426:SF1">
    <property type="entry name" value="HOMOLOGY TO DEATH-ON-CURING PROTEIN OF PHAGE P1"/>
    <property type="match status" value="1"/>
</dbReference>
<dbReference type="Pfam" id="PF02661">
    <property type="entry name" value="Fic"/>
    <property type="match status" value="1"/>
</dbReference>
<dbReference type="PROSITE" id="PS51459">
    <property type="entry name" value="FIDO"/>
    <property type="match status" value="1"/>
</dbReference>
<reference key="1">
    <citation type="submission" date="2006-10" db="EMBL/GenBank/DDBJ databases">
        <authorList>
            <person name="Fleischmann R.D."/>
            <person name="Dodson R.J."/>
            <person name="Haft D.H."/>
            <person name="Merkel J.S."/>
            <person name="Nelson W.C."/>
            <person name="Fraser C.M."/>
        </authorList>
    </citation>
    <scope>NUCLEOTIDE SEQUENCE [LARGE SCALE GENOMIC DNA]</scope>
    <source>
        <strain>ATCC 700084 / mc(2)155</strain>
    </source>
</reference>
<reference key="2">
    <citation type="journal article" date="2007" name="Genome Biol.">
        <title>Interrupted coding sequences in Mycobacterium smegmatis: authentic mutations or sequencing errors?</title>
        <authorList>
            <person name="Deshayes C."/>
            <person name="Perrodou E."/>
            <person name="Gallien S."/>
            <person name="Euphrasie D."/>
            <person name="Schaeffer C."/>
            <person name="Van-Dorsselaer A."/>
            <person name="Poch O."/>
            <person name="Lecompte O."/>
            <person name="Reyrat J.-M."/>
        </authorList>
    </citation>
    <scope>NUCLEOTIDE SEQUENCE [LARGE SCALE GENOMIC DNA]</scope>
    <source>
        <strain>ATCC 700084 / mc(2)155</strain>
    </source>
</reference>
<reference key="3">
    <citation type="journal article" date="2009" name="Genome Res.">
        <title>Ortho-proteogenomics: multiple proteomes investigation through orthology and a new MS-based protocol.</title>
        <authorList>
            <person name="Gallien S."/>
            <person name="Perrodou E."/>
            <person name="Carapito C."/>
            <person name="Deshayes C."/>
            <person name="Reyrat J.-M."/>
            <person name="Van Dorsselaer A."/>
            <person name="Poch O."/>
            <person name="Schaeffer C."/>
            <person name="Lecompte O."/>
        </authorList>
    </citation>
    <scope>NUCLEOTIDE SEQUENCE [LARGE SCALE GENOMIC DNA]</scope>
    <source>
        <strain>ATCC 700084 / mc(2)155</strain>
    </source>
</reference>
<reference key="4">
    <citation type="journal article" date="2012" name="J. Biol. Chem.">
        <title>Toxin-antitoxin systems of Mycobacterium smegmatis are essential for cell survival.</title>
        <authorList>
            <person name="Frampton R."/>
            <person name="Aggio R.B."/>
            <person name="Villas-Boas S.G."/>
            <person name="Arcus V.L."/>
            <person name="Cook G.M."/>
        </authorList>
    </citation>
    <scope>FUNCTION AS A TOXIN</scope>
    <scope>FUNCTION IN TRANSCRIPTION REGULATION</scope>
    <scope>INDUCTION</scope>
    <scope>DISRUPTION PHENOTYPE</scope>
    <source>
        <strain>ATCC 700084 / mc(2)155</strain>
    </source>
</reference>
<keyword id="KW-1185">Reference proteome</keyword>
<keyword id="KW-0678">Repressor</keyword>
<keyword id="KW-1277">Toxin-antitoxin system</keyword>
<keyword id="KW-0804">Transcription</keyword>
<keyword id="KW-0805">Transcription regulation</keyword>
<accession>A0QRY0</accession>